<protein>
    <recommendedName>
        <fullName>Zinc finger protein 750</fullName>
    </recommendedName>
</protein>
<dbReference type="EMBL" id="BC133373">
    <property type="protein sequence ID" value="AAI33374.1"/>
    <property type="molecule type" value="mRNA"/>
</dbReference>
<dbReference type="RefSeq" id="NP_001075002.1">
    <property type="nucleotide sequence ID" value="NM_001081533.1"/>
</dbReference>
<dbReference type="SMR" id="A2VDR9"/>
<dbReference type="FunCoup" id="A2VDR9">
    <property type="interactions" value="64"/>
</dbReference>
<dbReference type="STRING" id="9913.ENSBTAP00000034629"/>
<dbReference type="PaxDb" id="9913-ENSBTAP00000034629"/>
<dbReference type="Ensembl" id="ENSBTAT00000034744.4">
    <property type="protein sequence ID" value="ENSBTAP00000034629.2"/>
    <property type="gene ID" value="ENSBTAG00000015406.6"/>
</dbReference>
<dbReference type="GeneID" id="535628"/>
<dbReference type="KEGG" id="bta:535628"/>
<dbReference type="CTD" id="79755"/>
<dbReference type="VEuPathDB" id="HostDB:ENSBTAG00000015406"/>
<dbReference type="VGNC" id="VGNC:37340">
    <property type="gene designation" value="ZNF750"/>
</dbReference>
<dbReference type="eggNOG" id="ENOG502QU7X">
    <property type="taxonomic scope" value="Eukaryota"/>
</dbReference>
<dbReference type="GeneTree" id="ENSGT00530000063870"/>
<dbReference type="HOGENOM" id="CLU_023455_0_0_1"/>
<dbReference type="InParanoid" id="A2VDR9"/>
<dbReference type="OMA" id="PSAYDHY"/>
<dbReference type="OrthoDB" id="8933073at2759"/>
<dbReference type="TreeFam" id="TF331381"/>
<dbReference type="Reactome" id="R-BTA-212436">
    <property type="pathway name" value="Generic Transcription Pathway"/>
</dbReference>
<dbReference type="Proteomes" id="UP000009136">
    <property type="component" value="Chromosome 19"/>
</dbReference>
<dbReference type="Bgee" id="ENSBTAG00000015406">
    <property type="expression patterns" value="Expressed in esophagus and 68 other cell types or tissues"/>
</dbReference>
<dbReference type="GO" id="GO:0005634">
    <property type="term" value="C:nucleus"/>
    <property type="evidence" value="ECO:0000250"/>
    <property type="project" value="UniProtKB"/>
</dbReference>
<dbReference type="GO" id="GO:0001228">
    <property type="term" value="F:DNA-binding transcription activator activity, RNA polymerase II-specific"/>
    <property type="evidence" value="ECO:0000250"/>
    <property type="project" value="UniProtKB"/>
</dbReference>
<dbReference type="GO" id="GO:0001227">
    <property type="term" value="F:DNA-binding transcription repressor activity, RNA polymerase II-specific"/>
    <property type="evidence" value="ECO:0007669"/>
    <property type="project" value="Ensembl"/>
</dbReference>
<dbReference type="GO" id="GO:1990841">
    <property type="term" value="F:promoter-specific chromatin binding"/>
    <property type="evidence" value="ECO:0000250"/>
    <property type="project" value="UniProtKB"/>
</dbReference>
<dbReference type="GO" id="GO:0000978">
    <property type="term" value="F:RNA polymerase II cis-regulatory region sequence-specific DNA binding"/>
    <property type="evidence" value="ECO:0000250"/>
    <property type="project" value="UniProtKB"/>
</dbReference>
<dbReference type="GO" id="GO:0008270">
    <property type="term" value="F:zinc ion binding"/>
    <property type="evidence" value="ECO:0007669"/>
    <property type="project" value="UniProtKB-KW"/>
</dbReference>
<dbReference type="GO" id="GO:0030154">
    <property type="term" value="P:cell differentiation"/>
    <property type="evidence" value="ECO:0007669"/>
    <property type="project" value="UniProtKB-KW"/>
</dbReference>
<dbReference type="GO" id="GO:0008544">
    <property type="term" value="P:epidermis development"/>
    <property type="evidence" value="ECO:0000250"/>
    <property type="project" value="UniProtKB"/>
</dbReference>
<dbReference type="GO" id="GO:0061436">
    <property type="term" value="P:establishment of skin barrier"/>
    <property type="evidence" value="ECO:0007669"/>
    <property type="project" value="Ensembl"/>
</dbReference>
<dbReference type="GO" id="GO:0044091">
    <property type="term" value="P:membrane biogenesis"/>
    <property type="evidence" value="ECO:0007669"/>
    <property type="project" value="Ensembl"/>
</dbReference>
<dbReference type="GO" id="GO:0010719">
    <property type="term" value="P:negative regulation of epithelial to mesenchymal transition"/>
    <property type="evidence" value="ECO:0007669"/>
    <property type="project" value="Ensembl"/>
</dbReference>
<dbReference type="GO" id="GO:2000304">
    <property type="term" value="P:positive regulation of ceramide biosynthetic process"/>
    <property type="evidence" value="ECO:0007669"/>
    <property type="project" value="Ensembl"/>
</dbReference>
<dbReference type="GO" id="GO:0010628">
    <property type="term" value="P:positive regulation of gene expression"/>
    <property type="evidence" value="ECO:0007669"/>
    <property type="project" value="Ensembl"/>
</dbReference>
<dbReference type="GO" id="GO:0045944">
    <property type="term" value="P:positive regulation of transcription by RNA polymerase II"/>
    <property type="evidence" value="ECO:0000250"/>
    <property type="project" value="UniProtKB"/>
</dbReference>
<dbReference type="InterPro" id="IPR039363">
    <property type="entry name" value="ZNF750"/>
</dbReference>
<dbReference type="InterPro" id="IPR039064">
    <property type="entry name" value="ZNF750_Znf"/>
</dbReference>
<dbReference type="PANTHER" id="PTHR14678">
    <property type="entry name" value="PROLINE-RICH PROTEIN 35-RELATED"/>
    <property type="match status" value="1"/>
</dbReference>
<dbReference type="PANTHER" id="PTHR14678:SF1">
    <property type="entry name" value="ZINC FINGER PROTEIN 750"/>
    <property type="match status" value="1"/>
</dbReference>
<dbReference type="Pfam" id="PF15269">
    <property type="entry name" value="zf-C2H2_7"/>
    <property type="match status" value="1"/>
</dbReference>
<feature type="chain" id="PRO_0000284952" description="Zinc finger protein 750">
    <location>
        <begin position="1"/>
        <end position="703"/>
    </location>
</feature>
<feature type="zinc finger region" description="CCHC-type" evidence="2">
    <location>
        <begin position="25"/>
        <end position="51"/>
    </location>
</feature>
<feature type="region of interest" description="Disordered" evidence="3">
    <location>
        <begin position="60"/>
        <end position="96"/>
    </location>
</feature>
<feature type="region of interest" description="Disordered" evidence="3">
    <location>
        <begin position="121"/>
        <end position="147"/>
    </location>
</feature>
<feature type="region of interest" description="Disordered" evidence="3">
    <location>
        <begin position="362"/>
        <end position="617"/>
    </location>
</feature>
<feature type="region of interest" description="Disordered" evidence="3">
    <location>
        <begin position="633"/>
        <end position="703"/>
    </location>
</feature>
<feature type="compositionally biased region" description="Polar residues" evidence="3">
    <location>
        <begin position="67"/>
        <end position="78"/>
    </location>
</feature>
<feature type="compositionally biased region" description="Low complexity" evidence="3">
    <location>
        <begin position="79"/>
        <end position="93"/>
    </location>
</feature>
<feature type="compositionally biased region" description="Basic and acidic residues" evidence="3">
    <location>
        <begin position="375"/>
        <end position="399"/>
    </location>
</feature>
<feature type="compositionally biased region" description="Polar residues" evidence="3">
    <location>
        <begin position="418"/>
        <end position="428"/>
    </location>
</feature>
<feature type="compositionally biased region" description="Low complexity" evidence="3">
    <location>
        <begin position="583"/>
        <end position="592"/>
    </location>
</feature>
<feature type="compositionally biased region" description="Basic and acidic residues" evidence="3">
    <location>
        <begin position="605"/>
        <end position="616"/>
    </location>
</feature>
<feature type="binding site" evidence="2">
    <location>
        <position position="27"/>
    </location>
    <ligand>
        <name>Zn(2+)</name>
        <dbReference type="ChEBI" id="CHEBI:29105"/>
    </ligand>
</feature>
<feature type="binding site" evidence="2">
    <location>
        <position position="30"/>
    </location>
    <ligand>
        <name>Zn(2+)</name>
        <dbReference type="ChEBI" id="CHEBI:29105"/>
    </ligand>
</feature>
<feature type="binding site" evidence="2">
    <location>
        <position position="43"/>
    </location>
    <ligand>
        <name>Zn(2+)</name>
        <dbReference type="ChEBI" id="CHEBI:29105"/>
    </ligand>
</feature>
<feature type="binding site" evidence="2">
    <location>
        <position position="49"/>
    </location>
    <ligand>
        <name>Zn(2+)</name>
        <dbReference type="ChEBI" id="CHEBI:29105"/>
    </ligand>
</feature>
<comment type="function">
    <text evidence="1">Transcription factor involved in epidermis differentiation. Required for terminal epidermal differentiation: acts downstream of p63/TP63 and activates expression of late epidermal differentiation genes. Specifically binds to the promoter of KLF4 and promotes its expression (By similarity).</text>
</comment>
<comment type="subcellular location">
    <subcellularLocation>
        <location evidence="1">Nucleus</location>
    </subcellularLocation>
</comment>
<proteinExistence type="evidence at transcript level"/>
<evidence type="ECO:0000250" key="1"/>
<evidence type="ECO:0000250" key="2">
    <source>
        <dbReference type="UniProtKB" id="Q32MQ0"/>
    </source>
</evidence>
<evidence type="ECO:0000256" key="3">
    <source>
        <dbReference type="SAM" id="MobiDB-lite"/>
    </source>
</evidence>
<organism>
    <name type="scientific">Bos taurus</name>
    <name type="common">Bovine</name>
    <dbReference type="NCBI Taxonomy" id="9913"/>
    <lineage>
        <taxon>Eukaryota</taxon>
        <taxon>Metazoa</taxon>
        <taxon>Chordata</taxon>
        <taxon>Craniata</taxon>
        <taxon>Vertebrata</taxon>
        <taxon>Euteleostomi</taxon>
        <taxon>Mammalia</taxon>
        <taxon>Eutheria</taxon>
        <taxon>Laurasiatheria</taxon>
        <taxon>Artiodactyla</taxon>
        <taxon>Ruminantia</taxon>
        <taxon>Pecora</taxon>
        <taxon>Bovidae</taxon>
        <taxon>Bovinae</taxon>
        <taxon>Bos</taxon>
    </lineage>
</organism>
<accession>A2VDR9</accession>
<name>ZN750_BOVIN</name>
<reference key="1">
    <citation type="submission" date="2007-02" db="EMBL/GenBank/DDBJ databases">
        <authorList>
            <consortium name="NIH - Mammalian Gene Collection (MGC) project"/>
        </authorList>
    </citation>
    <scope>NUCLEOTIDE SEQUENCE [LARGE SCALE MRNA]</scope>
    <source>
        <strain>Hereford</strain>
        <tissue>Fetal skin</tissue>
    </source>
</reference>
<gene>
    <name type="primary">ZNF750</name>
</gene>
<keyword id="KW-0010">Activator</keyword>
<keyword id="KW-0221">Differentiation</keyword>
<keyword id="KW-0479">Metal-binding</keyword>
<keyword id="KW-0539">Nucleus</keyword>
<keyword id="KW-1185">Reference proteome</keyword>
<keyword id="KW-0804">Transcription</keyword>
<keyword id="KW-0805">Transcription regulation</keyword>
<keyword id="KW-0862">Zinc</keyword>
<keyword id="KW-0863">Zinc-finger</keyword>
<sequence>MSLLKERKPKKPHYIPRPPGKPFKYKCFQCPFTCNEKSHLFNHMKYGLCKNSITLVSEQDRVPKCSKPNSSDPKQTNQPDPVVKPTSSKPVPSGLSHLDAKLQHSLAKDDIKENLDLHARGPHRCLGQKPTPHKEAAPPSPAPEAAVGTQPVLEGAVRPSAFVPVGEHRLKGQELTETPEALALTHAPAKASSFHTKSAFHAPGYPWRAGSPFLTPEFPHKIPSTKGFGATSPYVHPSITEYPPHFYTEHGLATIYSPYLLAGNSPECDSPLLSVYGAQDQRHFLPHPGPIPKHLNPAPSTYDHYRFFQQYHSSLPIPYGFYRPESAFSSYGLRLPPVAGISRDQSSHLLEEAALGYQALSPSKLNSSNSHKKHTELEKQSPTPEAKEPSKDGQRDTEGTKMSPRAGSAATGSPGRPSPTNFTQTSQPCAGLCGLSDAPASSAPGRIPPPEQGLAAFKPIKKNTEHPHSQAPENRAVSPKSLEALSTDAPTQLGSLEAAPSSPEDGSRAAPLNLSTKPEAEPAATCSPAHGGFVEPQDAPLNLSVKDPCNALTSRPSVCSPPRGAEPAAAPTPSPTQQREPASSGDGPDPSSVEAPVPSPTGKAQDIRAADSDEQKQTAAVALCQLAAYSPGNVEPAAQEPTCRPDAPTPRAPESQEAQCDLRPKGQKRTSPREVGKGQQGSKKAKPSDTARVFTLRKRTRVS</sequence>